<evidence type="ECO:0000269" key="1">
    <source>
    </source>
</evidence>
<evidence type="ECO:0000305" key="2"/>
<comment type="subcellular location">
    <subcellularLocation>
        <location>Secreted</location>
    </subcellularLocation>
</comment>
<comment type="mass spectrometry"/>
<comment type="similarity">
    <text evidence="2">Belongs to the FARP (FMRFamide related peptide) family.</text>
</comment>
<sequence>SMPSLRLRF</sequence>
<accession>P83320</accession>
<dbReference type="GO" id="GO:0005576">
    <property type="term" value="C:extracellular region"/>
    <property type="evidence" value="ECO:0007669"/>
    <property type="project" value="UniProtKB-SubCell"/>
</dbReference>
<dbReference type="GO" id="GO:0007218">
    <property type="term" value="P:neuropeptide signaling pathway"/>
    <property type="evidence" value="ECO:0000304"/>
    <property type="project" value="UniProtKB"/>
</dbReference>
<proteinExistence type="evidence at protein level"/>
<protein>
    <recommendedName>
        <fullName>FMRFamide-like neuropeptide FLP5</fullName>
    </recommendedName>
    <alternativeName>
        <fullName>SMPSLRLRF-amide</fullName>
    </alternativeName>
</protein>
<keyword id="KW-0027">Amidation</keyword>
<keyword id="KW-0903">Direct protein sequencing</keyword>
<keyword id="KW-0527">Neuropeptide</keyword>
<keyword id="KW-0964">Secreted</keyword>
<name>FAR5_PENMO</name>
<feature type="peptide" id="PRO_0000043701" description="FMRFamide-like neuropeptide FLP5">
    <location>
        <begin position="1"/>
        <end position="9"/>
    </location>
</feature>
<feature type="modified residue" description="Phenylalanine amide" evidence="1">
    <location>
        <position position="9"/>
    </location>
</feature>
<organism evidence="2">
    <name type="scientific">Penaeus monodon</name>
    <name type="common">Giant tiger prawn</name>
    <dbReference type="NCBI Taxonomy" id="6687"/>
    <lineage>
        <taxon>Eukaryota</taxon>
        <taxon>Metazoa</taxon>
        <taxon>Ecdysozoa</taxon>
        <taxon>Arthropoda</taxon>
        <taxon>Crustacea</taxon>
        <taxon>Multicrustacea</taxon>
        <taxon>Malacostraca</taxon>
        <taxon>Eumalacostraca</taxon>
        <taxon>Eucarida</taxon>
        <taxon>Decapoda</taxon>
        <taxon>Dendrobranchiata</taxon>
        <taxon>Penaeoidea</taxon>
        <taxon>Penaeidae</taxon>
        <taxon>Penaeus</taxon>
    </lineage>
</organism>
<reference key="1">
    <citation type="journal article" date="2002" name="Comp. Biochem. Physiol.">
        <title>Seven novel FMRFamide-like neuropeptide sequences from the eyestalk of the giant tiger prawn Penaeus monodon.</title>
        <authorList>
            <person name="Sithigorngul P."/>
            <person name="Pupuem J."/>
            <person name="Krungkasem C."/>
            <person name="Longyant S."/>
            <person name="Chaivisuthangkura P."/>
            <person name="Sithigorngul W."/>
            <person name="Petsom A."/>
        </authorList>
    </citation>
    <scope>PROTEIN SEQUENCE</scope>
    <scope>AMIDATION AT PHE-9</scope>
    <scope>MASS SPECTROMETRY</scope>
    <source>
        <tissue>Eyestalk</tissue>
    </source>
</reference>